<reference key="1">
    <citation type="journal article" date="2009" name="PLoS Biol.">
        <title>Lineage-specific biology revealed by a finished genome assembly of the mouse.</title>
        <authorList>
            <person name="Church D.M."/>
            <person name="Goodstadt L."/>
            <person name="Hillier L.W."/>
            <person name="Zody M.C."/>
            <person name="Goldstein S."/>
            <person name="She X."/>
            <person name="Bult C.J."/>
            <person name="Agarwala R."/>
            <person name="Cherry J.L."/>
            <person name="DiCuccio M."/>
            <person name="Hlavina W."/>
            <person name="Kapustin Y."/>
            <person name="Meric P."/>
            <person name="Maglott D."/>
            <person name="Birtle Z."/>
            <person name="Marques A.C."/>
            <person name="Graves T."/>
            <person name="Zhou S."/>
            <person name="Teague B."/>
            <person name="Potamousis K."/>
            <person name="Churas C."/>
            <person name="Place M."/>
            <person name="Herschleb J."/>
            <person name="Runnheim R."/>
            <person name="Forrest D."/>
            <person name="Amos-Landgraf J."/>
            <person name="Schwartz D.C."/>
            <person name="Cheng Z."/>
            <person name="Lindblad-Toh K."/>
            <person name="Eichler E.E."/>
            <person name="Ponting C.P."/>
        </authorList>
    </citation>
    <scope>NUCLEOTIDE SEQUENCE [LARGE SCALE GENOMIC DNA]</scope>
    <source>
        <strain>C57BL/6J</strain>
    </source>
</reference>
<reference key="2">
    <citation type="journal article" date="2004" name="Genome Res.">
        <title>The status, quality, and expansion of the NIH full-length cDNA project: the Mammalian Gene Collection (MGC).</title>
        <authorList>
            <consortium name="The MGC Project Team"/>
        </authorList>
    </citation>
    <scope>NUCLEOTIDE SEQUENCE [LARGE SCALE MRNA] OF 345-442</scope>
</reference>
<evidence type="ECO:0000250" key="1">
    <source>
        <dbReference type="UniProtKB" id="Q8NEF3"/>
    </source>
</evidence>
<evidence type="ECO:0000255" key="2"/>
<evidence type="ECO:0000256" key="3">
    <source>
        <dbReference type="SAM" id="MobiDB-lite"/>
    </source>
</evidence>
<evidence type="ECO:0000305" key="4"/>
<protein>
    <recommendedName>
        <fullName>Coiled-coil domain-containing protein 112</fullName>
    </recommendedName>
</protein>
<dbReference type="EMBL" id="AC124717">
    <property type="status" value="NOT_ANNOTATED_CDS"/>
    <property type="molecule type" value="Genomic_DNA"/>
</dbReference>
<dbReference type="EMBL" id="BC119623">
    <property type="protein sequence ID" value="AAI19624.1"/>
    <property type="status" value="ALT_INIT"/>
    <property type="molecule type" value="mRNA"/>
</dbReference>
<dbReference type="EMBL" id="BC119624">
    <property type="protein sequence ID" value="AAI19625.1"/>
    <property type="status" value="ALT_INIT"/>
    <property type="molecule type" value="mRNA"/>
</dbReference>
<dbReference type="SMR" id="A0AUP1"/>
<dbReference type="FunCoup" id="A0AUP1">
    <property type="interactions" value="70"/>
</dbReference>
<dbReference type="STRING" id="10090.ENSMUSP00000072614"/>
<dbReference type="GlyGen" id="A0AUP1">
    <property type="glycosylation" value="1 site"/>
</dbReference>
<dbReference type="iPTMnet" id="A0AUP1"/>
<dbReference type="PhosphoSitePlus" id="A0AUP1"/>
<dbReference type="jPOST" id="A0AUP1"/>
<dbReference type="PaxDb" id="10090-ENSMUSP00000072614"/>
<dbReference type="PeptideAtlas" id="A0AUP1"/>
<dbReference type="ProteomicsDB" id="265574"/>
<dbReference type="AGR" id="MGI:1918800"/>
<dbReference type="MGI" id="MGI:1918800">
    <property type="gene designation" value="Ccdc112"/>
</dbReference>
<dbReference type="eggNOG" id="ENOG502QUHE">
    <property type="taxonomic scope" value="Eukaryota"/>
</dbReference>
<dbReference type="InParanoid" id="A0AUP1"/>
<dbReference type="ChiTaRS" id="Ccdc112">
    <property type="organism name" value="mouse"/>
</dbReference>
<dbReference type="PRO" id="PR:A0AUP1"/>
<dbReference type="Proteomes" id="UP000000589">
    <property type="component" value="Unplaced"/>
</dbReference>
<dbReference type="RNAct" id="A0AUP1">
    <property type="molecule type" value="protein"/>
</dbReference>
<dbReference type="GO" id="GO:0034451">
    <property type="term" value="C:centriolar satellite"/>
    <property type="evidence" value="ECO:0000250"/>
    <property type="project" value="UniProtKB"/>
</dbReference>
<dbReference type="GO" id="GO:0005737">
    <property type="term" value="C:cytoplasm"/>
    <property type="evidence" value="ECO:0007669"/>
    <property type="project" value="UniProtKB-KW"/>
</dbReference>
<dbReference type="InterPro" id="IPR039902">
    <property type="entry name" value="CCDC148/CCDC112"/>
</dbReference>
<dbReference type="PANTHER" id="PTHR21549:SF0">
    <property type="entry name" value="COILED-COIL DOMAIN-CONTAINING PROTEIN 112"/>
    <property type="match status" value="1"/>
</dbReference>
<dbReference type="PANTHER" id="PTHR21549">
    <property type="entry name" value="MUTATED IN BLADDER CANCER 1"/>
    <property type="match status" value="1"/>
</dbReference>
<gene>
    <name type="primary">Ccdc112</name>
</gene>
<keyword id="KW-0175">Coiled coil</keyword>
<keyword id="KW-0963">Cytoplasm</keyword>
<keyword id="KW-0206">Cytoskeleton</keyword>
<keyword id="KW-1185">Reference proteome</keyword>
<proteinExistence type="evidence at transcript level"/>
<feature type="chain" id="PRO_0000320162" description="Coiled-coil domain-containing protein 112">
    <location>
        <begin position="1"/>
        <end position="442"/>
    </location>
</feature>
<feature type="region of interest" description="Disordered" evidence="3">
    <location>
        <begin position="245"/>
        <end position="272"/>
    </location>
</feature>
<feature type="region of interest" description="Disordered" evidence="3">
    <location>
        <begin position="289"/>
        <end position="312"/>
    </location>
</feature>
<feature type="region of interest" description="Disordered" evidence="3">
    <location>
        <begin position="392"/>
        <end position="442"/>
    </location>
</feature>
<feature type="coiled-coil region" evidence="2">
    <location>
        <begin position="23"/>
        <end position="116"/>
    </location>
</feature>
<feature type="coiled-coil region" evidence="2">
    <location>
        <begin position="217"/>
        <end position="249"/>
    </location>
</feature>
<feature type="coiled-coil region" evidence="2">
    <location>
        <begin position="281"/>
        <end position="400"/>
    </location>
</feature>
<feature type="compositionally biased region" description="Basic and acidic residues" evidence="3">
    <location>
        <begin position="256"/>
        <end position="268"/>
    </location>
</feature>
<feature type="compositionally biased region" description="Basic and acidic residues" evidence="3">
    <location>
        <begin position="294"/>
        <end position="310"/>
    </location>
</feature>
<organism>
    <name type="scientific">Mus musculus</name>
    <name type="common">Mouse</name>
    <dbReference type="NCBI Taxonomy" id="10090"/>
    <lineage>
        <taxon>Eukaryota</taxon>
        <taxon>Metazoa</taxon>
        <taxon>Chordata</taxon>
        <taxon>Craniata</taxon>
        <taxon>Vertebrata</taxon>
        <taxon>Euteleostomi</taxon>
        <taxon>Mammalia</taxon>
        <taxon>Eutheria</taxon>
        <taxon>Euarchontoglires</taxon>
        <taxon>Glires</taxon>
        <taxon>Rodentia</taxon>
        <taxon>Myomorpha</taxon>
        <taxon>Muroidea</taxon>
        <taxon>Muridae</taxon>
        <taxon>Murinae</taxon>
        <taxon>Mus</taxon>
        <taxon>Mus</taxon>
    </lineage>
</organism>
<name>CC112_MOUSE</name>
<sequence>MEKDKHSHFYNQRGDFRTEYNMLEELENKLINSRKTERAKIQQQLAKIHNNVKKLQNQLKDVKPTPDVVEKLREMMEEIENAINTFKEEQRLIYEELIQEEKTTNNELSAVSRRIESWALGNSETEKAFRAISSKVPVDRVTQRTLPEQVVEFEKFLQQTGGRQGGWDALDHQNFVKVRNKHKGKPTFMKEVVEHLPGRTLDEVQQHEKWYQKFLTLEEKKKESIQNWKTKKQQKKEEILKLKEKVDTVPLPSQSKAEDSPKQREEQRKKQKLAVEAWKKRKSLEMSAKLASQLREEEEKERKQQRERQRQSKLKLLLESYTQQRREQEEFLRLEQEIKEKAEKAEKRKTAADELARFQERDLHKLELKILDRQAKEEEKAEKQRRLTKLKEKVENNVSRDPSRLYKPTKGWEERTKKIGPSGSGPLLHIPHRAIPTWRQGI</sequence>
<comment type="subcellular location">
    <subcellularLocation>
        <location evidence="1">Cytoplasm</location>
        <location evidence="1">Cytoskeleton</location>
        <location evidence="1">Microtubule organizing center</location>
        <location evidence="1">Centrosome</location>
        <location evidence="1">Centriolar satellite</location>
    </subcellularLocation>
</comment>
<comment type="sequence caution" evidence="4">
    <conflict type="erroneous initiation">
        <sequence resource="EMBL-CDS" id="AAI19624"/>
    </conflict>
</comment>
<comment type="sequence caution" evidence="4">
    <conflict type="erroneous initiation">
        <sequence resource="EMBL-CDS" id="AAI19625"/>
    </conflict>
</comment>
<accession>A0AUP1</accession>
<accession>A0AUP2</accession>